<accession>Q9ZNV5</accession>
<accession>Q7GA80</accession>
<sequence length="175" mass="19893">MARISSDPLMVGRVIGDVVDNCLQAVKMTVTYNSDKQVYNGHELFPSVVTYKPKVEVHGGDMRSFFTLVMTDPDVPGPSDPYLREHLHWIVTDIPGTTDVSFGKEIIGYEMPRPNIGIHRFVYLLFKQTRRGSVVSVPSYRDQFNTREFAHENDLGLPVAAVFFNCQRETAARRR</sequence>
<reference key="1">
    <citation type="journal article" date="2001" name="Genes Cells">
        <title>Functional divergence of the TFL1-like gene family in Arabidopsis revealed by characterization of a novel homologue.</title>
        <authorList>
            <person name="Mimida N."/>
            <person name="Goto K."/>
            <person name="Kobayashi Y."/>
            <person name="Araki T."/>
            <person name="Ahn J.H."/>
            <person name="Weigel D."/>
            <person name="Murata M."/>
            <person name="Motoyoshi F."/>
            <person name="Sakamoto W."/>
        </authorList>
    </citation>
    <scope>NUCLEOTIDE SEQUENCE [GENOMIC DNA / MRNA]</scope>
    <scope>TISSUE SPECIFICITY</scope>
    <scope>DISRUPTION PHENOTYPE</scope>
    <source>
        <strain>cv. Columbia</strain>
        <strain>cv. Landsberg erecta</strain>
    </source>
</reference>
<reference key="2">
    <citation type="journal article" date="1999" name="Nature">
        <title>Sequence and analysis of chromosome 2 of the plant Arabidopsis thaliana.</title>
        <authorList>
            <person name="Lin X."/>
            <person name="Kaul S."/>
            <person name="Rounsley S.D."/>
            <person name="Shea T.P."/>
            <person name="Benito M.-I."/>
            <person name="Town C.D."/>
            <person name="Fujii C.Y."/>
            <person name="Mason T.M."/>
            <person name="Bowman C.L."/>
            <person name="Barnstead M.E."/>
            <person name="Feldblyum T.V."/>
            <person name="Buell C.R."/>
            <person name="Ketchum K.A."/>
            <person name="Lee J.J."/>
            <person name="Ronning C.M."/>
            <person name="Koo H.L."/>
            <person name="Moffat K.S."/>
            <person name="Cronin L.A."/>
            <person name="Shen M."/>
            <person name="Pai G."/>
            <person name="Van Aken S."/>
            <person name="Umayam L."/>
            <person name="Tallon L.J."/>
            <person name="Gill J.E."/>
            <person name="Adams M.D."/>
            <person name="Carrera A.J."/>
            <person name="Creasy T.H."/>
            <person name="Goodman H.M."/>
            <person name="Somerville C.R."/>
            <person name="Copenhaver G.P."/>
            <person name="Preuss D."/>
            <person name="Nierman W.C."/>
            <person name="White O."/>
            <person name="Eisen J.A."/>
            <person name="Salzberg S.L."/>
            <person name="Fraser C.M."/>
            <person name="Venter J.C."/>
        </authorList>
    </citation>
    <scope>NUCLEOTIDE SEQUENCE [LARGE SCALE GENOMIC DNA]</scope>
    <source>
        <strain>cv. Columbia</strain>
    </source>
</reference>
<reference key="3">
    <citation type="journal article" date="2017" name="Plant J.">
        <title>Araport11: a complete reannotation of the Arabidopsis thaliana reference genome.</title>
        <authorList>
            <person name="Cheng C.Y."/>
            <person name="Krishnakumar V."/>
            <person name="Chan A.P."/>
            <person name="Thibaud-Nissen F."/>
            <person name="Schobel S."/>
            <person name="Town C.D."/>
        </authorList>
    </citation>
    <scope>GENOME REANNOTATION</scope>
    <source>
        <strain>cv. Columbia</strain>
    </source>
</reference>
<reference key="4">
    <citation type="journal article" date="2003" name="Science">
        <title>Empirical analysis of transcriptional activity in the Arabidopsis genome.</title>
        <authorList>
            <person name="Yamada K."/>
            <person name="Lim J."/>
            <person name="Dale J.M."/>
            <person name="Chen H."/>
            <person name="Shinn P."/>
            <person name="Palm C.J."/>
            <person name="Southwick A.M."/>
            <person name="Wu H.C."/>
            <person name="Kim C.J."/>
            <person name="Nguyen M."/>
            <person name="Pham P.K."/>
            <person name="Cheuk R.F."/>
            <person name="Karlin-Newmann G."/>
            <person name="Liu S.X."/>
            <person name="Lam B."/>
            <person name="Sakano H."/>
            <person name="Wu T."/>
            <person name="Yu G."/>
            <person name="Miranda M."/>
            <person name="Quach H.L."/>
            <person name="Tripp M."/>
            <person name="Chang C.H."/>
            <person name="Lee J.M."/>
            <person name="Toriumi M.J."/>
            <person name="Chan M.M."/>
            <person name="Tang C.C."/>
            <person name="Onodera C.S."/>
            <person name="Deng J.M."/>
            <person name="Akiyama K."/>
            <person name="Ansari Y."/>
            <person name="Arakawa T."/>
            <person name="Banh J."/>
            <person name="Banno F."/>
            <person name="Bowser L."/>
            <person name="Brooks S.Y."/>
            <person name="Carninci P."/>
            <person name="Chao Q."/>
            <person name="Choy N."/>
            <person name="Enju A."/>
            <person name="Goldsmith A.D."/>
            <person name="Gurjal M."/>
            <person name="Hansen N.F."/>
            <person name="Hayashizaki Y."/>
            <person name="Johnson-Hopson C."/>
            <person name="Hsuan V.W."/>
            <person name="Iida K."/>
            <person name="Karnes M."/>
            <person name="Khan S."/>
            <person name="Koesema E."/>
            <person name="Ishida J."/>
            <person name="Jiang P.X."/>
            <person name="Jones T."/>
            <person name="Kawai J."/>
            <person name="Kamiya A."/>
            <person name="Meyers C."/>
            <person name="Nakajima M."/>
            <person name="Narusaka M."/>
            <person name="Seki M."/>
            <person name="Sakurai T."/>
            <person name="Satou M."/>
            <person name="Tamse R."/>
            <person name="Vaysberg M."/>
            <person name="Wallender E.K."/>
            <person name="Wong C."/>
            <person name="Yamamura Y."/>
            <person name="Yuan S."/>
            <person name="Shinozaki K."/>
            <person name="Davis R.W."/>
            <person name="Theologis A."/>
            <person name="Ecker J.R."/>
        </authorList>
    </citation>
    <scope>NUCLEOTIDE SEQUENCE [LARGE SCALE MRNA]</scope>
    <source>
        <strain>cv. Columbia</strain>
    </source>
</reference>
<gene>
    <name type="primary">CEN</name>
    <name type="synonym">ATC</name>
    <name type="ordered locus">At2g27550</name>
    <name type="ORF">F10A12.22</name>
    <name type="ORF">F15K20.35</name>
</gene>
<proteinExistence type="evidence at transcript level"/>
<protein>
    <recommendedName>
        <fullName>Protein CENTRORADIALIS-like</fullName>
    </recommendedName>
</protein>
<evidence type="ECO:0000250" key="1"/>
<evidence type="ECO:0000269" key="2">
    <source>
    </source>
</evidence>
<evidence type="ECO:0000305" key="3"/>
<name>CEN_ARATH</name>
<keyword id="KW-0963">Cytoplasm</keyword>
<keyword id="KW-1185">Reference proteome</keyword>
<dbReference type="EMBL" id="AB024712">
    <property type="protein sequence ID" value="BAA75933.1"/>
    <property type="molecule type" value="Genomic_DNA"/>
</dbReference>
<dbReference type="EMBL" id="AB024714">
    <property type="protein sequence ID" value="BAA75931.1"/>
    <property type="molecule type" value="Genomic_DNA"/>
</dbReference>
<dbReference type="EMBL" id="AB024715">
    <property type="protein sequence ID" value="BAA75932.1"/>
    <property type="molecule type" value="mRNA"/>
</dbReference>
<dbReference type="EMBL" id="AC005824">
    <property type="protein sequence ID" value="AAC73043.1"/>
    <property type="molecule type" value="Genomic_DNA"/>
</dbReference>
<dbReference type="EMBL" id="AC006232">
    <property type="protein sequence ID" value="AAM15187.1"/>
    <property type="molecule type" value="Genomic_DNA"/>
</dbReference>
<dbReference type="EMBL" id="CP002685">
    <property type="protein sequence ID" value="AEC08014.1"/>
    <property type="molecule type" value="Genomic_DNA"/>
</dbReference>
<dbReference type="EMBL" id="AY065211">
    <property type="protein sequence ID" value="AAL38687.1"/>
    <property type="molecule type" value="mRNA"/>
</dbReference>
<dbReference type="EMBL" id="AY096515">
    <property type="protein sequence ID" value="AAM20165.1"/>
    <property type="molecule type" value="mRNA"/>
</dbReference>
<dbReference type="PIR" id="C84674">
    <property type="entry name" value="C84674"/>
</dbReference>
<dbReference type="RefSeq" id="NP_180324.1">
    <property type="nucleotide sequence ID" value="NM_128315.4"/>
</dbReference>
<dbReference type="SMR" id="Q9ZNV5"/>
<dbReference type="BioGRID" id="2654">
    <property type="interactions" value="1"/>
</dbReference>
<dbReference type="FunCoup" id="Q9ZNV5">
    <property type="interactions" value="922"/>
</dbReference>
<dbReference type="STRING" id="3702.Q9ZNV5"/>
<dbReference type="iPTMnet" id="Q9ZNV5"/>
<dbReference type="PaxDb" id="3702-AT2G27550.1"/>
<dbReference type="ProteomicsDB" id="224473"/>
<dbReference type="EnsemblPlants" id="AT2G27550.1">
    <property type="protein sequence ID" value="AT2G27550.1"/>
    <property type="gene ID" value="AT2G27550"/>
</dbReference>
<dbReference type="GeneID" id="817302"/>
<dbReference type="Gramene" id="AT2G27550.1">
    <property type="protein sequence ID" value="AT2G27550.1"/>
    <property type="gene ID" value="AT2G27550"/>
</dbReference>
<dbReference type="KEGG" id="ath:AT2G27550"/>
<dbReference type="Araport" id="AT2G27550"/>
<dbReference type="TAIR" id="AT2G27550">
    <property type="gene designation" value="ATC"/>
</dbReference>
<dbReference type="eggNOG" id="KOG3346">
    <property type="taxonomic scope" value="Eukaryota"/>
</dbReference>
<dbReference type="HOGENOM" id="CLU_043994_6_1_1"/>
<dbReference type="InParanoid" id="Q9ZNV5"/>
<dbReference type="OMA" id="LIYEQKC"/>
<dbReference type="OrthoDB" id="2506647at2759"/>
<dbReference type="PhylomeDB" id="Q9ZNV5"/>
<dbReference type="PRO" id="PR:Q9ZNV5"/>
<dbReference type="Proteomes" id="UP000006548">
    <property type="component" value="Chromosome 2"/>
</dbReference>
<dbReference type="ExpressionAtlas" id="Q9ZNV5">
    <property type="expression patterns" value="baseline and differential"/>
</dbReference>
<dbReference type="GO" id="GO:0005737">
    <property type="term" value="C:cytoplasm"/>
    <property type="evidence" value="ECO:0000314"/>
    <property type="project" value="TAIR"/>
</dbReference>
<dbReference type="GO" id="GO:0005634">
    <property type="term" value="C:nucleus"/>
    <property type="evidence" value="ECO:0000314"/>
    <property type="project" value="TAIR"/>
</dbReference>
<dbReference type="GO" id="GO:0009910">
    <property type="term" value="P:negative regulation of flower development"/>
    <property type="evidence" value="ECO:0000315"/>
    <property type="project" value="TAIR"/>
</dbReference>
<dbReference type="GO" id="GO:0010228">
    <property type="term" value="P:vegetative to reproductive phase transition of meristem"/>
    <property type="evidence" value="ECO:0000315"/>
    <property type="project" value="TAIR"/>
</dbReference>
<dbReference type="CDD" id="cd00866">
    <property type="entry name" value="PEBP_euk"/>
    <property type="match status" value="1"/>
</dbReference>
<dbReference type="FunFam" id="3.90.280.10:FF:000001">
    <property type="entry name" value="Terminal flower 1"/>
    <property type="match status" value="1"/>
</dbReference>
<dbReference type="Gene3D" id="3.90.280.10">
    <property type="entry name" value="PEBP-like"/>
    <property type="match status" value="1"/>
</dbReference>
<dbReference type="InterPro" id="IPR008914">
    <property type="entry name" value="PEBP"/>
</dbReference>
<dbReference type="InterPro" id="IPR036610">
    <property type="entry name" value="PEBP-like_sf"/>
</dbReference>
<dbReference type="InterPro" id="IPR035810">
    <property type="entry name" value="PEBP_euk"/>
</dbReference>
<dbReference type="InterPro" id="IPR001858">
    <property type="entry name" value="Phosphatidylethanolamine-bd_CS"/>
</dbReference>
<dbReference type="PANTHER" id="PTHR11362">
    <property type="entry name" value="PHOSPHATIDYLETHANOLAMINE-BINDING PROTEIN"/>
    <property type="match status" value="1"/>
</dbReference>
<dbReference type="PANTHER" id="PTHR11362:SF48">
    <property type="entry name" value="PROTEIN CENTRORADIALIS-LIKE"/>
    <property type="match status" value="1"/>
</dbReference>
<dbReference type="Pfam" id="PF01161">
    <property type="entry name" value="PBP"/>
    <property type="match status" value="1"/>
</dbReference>
<dbReference type="SUPFAM" id="SSF49777">
    <property type="entry name" value="PEBP-like"/>
    <property type="match status" value="1"/>
</dbReference>
<dbReference type="PROSITE" id="PS01220">
    <property type="entry name" value="PBP"/>
    <property type="match status" value="1"/>
</dbReference>
<organism>
    <name type="scientific">Arabidopsis thaliana</name>
    <name type="common">Mouse-ear cress</name>
    <dbReference type="NCBI Taxonomy" id="3702"/>
    <lineage>
        <taxon>Eukaryota</taxon>
        <taxon>Viridiplantae</taxon>
        <taxon>Streptophyta</taxon>
        <taxon>Embryophyta</taxon>
        <taxon>Tracheophyta</taxon>
        <taxon>Spermatophyta</taxon>
        <taxon>Magnoliopsida</taxon>
        <taxon>eudicotyledons</taxon>
        <taxon>Gunneridae</taxon>
        <taxon>Pentapetalae</taxon>
        <taxon>rosids</taxon>
        <taxon>malvids</taxon>
        <taxon>Brassicales</taxon>
        <taxon>Brassicaceae</taxon>
        <taxon>Camelineae</taxon>
        <taxon>Arabidopsis</taxon>
    </lineage>
</organism>
<comment type="function">
    <text evidence="1">May form complexes with phosphorylated ligands by interfering with kinases and their effectors (By similarity). Can substitute for TERMINAL FLOWER 1 (in vitro).</text>
</comment>
<comment type="subcellular location">
    <subcellularLocation>
        <location evidence="1">Cytoplasm</location>
    </subcellularLocation>
</comment>
<comment type="tissue specificity">
    <text evidence="2">Expressed in tissues surrounding vascular bundles in hypocotyl of 2-week-old plants.</text>
</comment>
<comment type="disruption phenotype">
    <text evidence="2">Plants do not show a phenotype similar to those of TERMINAL FLOWER 1 mutants.</text>
</comment>
<comment type="similarity">
    <text evidence="3">Belongs to the phosphatidylethanolamine-binding protein family.</text>
</comment>
<feature type="chain" id="PRO_0000204756" description="Protein CENTRORADIALIS-like">
    <location>
        <begin position="1"/>
        <end position="175"/>
    </location>
</feature>